<gene>
    <name type="primary">pvdQ</name>
    <name type="ordered locus">PP_2901</name>
</gene>
<accession>Q88IU8</accession>
<comment type="function">
    <text evidence="1">Catalyzes the deacylation of acyl-homoserine lactone (AHL or acyl-HSL), releasing homoserine lactone (HSL) and the corresponding fatty acid. Possesses a specificity for the degradation of long-chain acyl-HSLs (side chains of 11 to 14 carbons in length) (By similarity).</text>
</comment>
<comment type="catalytic activity">
    <reaction>
        <text>an N-acyl-L-homoserine lactone + H2O = L-homoserine lactone + a carboxylate</text>
        <dbReference type="Rhea" id="RHEA:18937"/>
        <dbReference type="ChEBI" id="CHEBI:15377"/>
        <dbReference type="ChEBI" id="CHEBI:29067"/>
        <dbReference type="ChEBI" id="CHEBI:55474"/>
        <dbReference type="ChEBI" id="CHEBI:58633"/>
        <dbReference type="EC" id="3.5.1.97"/>
    </reaction>
</comment>
<comment type="subunit">
    <text evidence="1">Heterodimer of an alpha subunit and a beta subunit processed from the same precursor.</text>
</comment>
<comment type="subcellular location">
    <subcellularLocation>
        <location evidence="1">Periplasm</location>
    </subcellularLocation>
</comment>
<comment type="miscellaneous">
    <text>AHL-mediated signaling mediates quorum sensing in many species of Proteobacteria, regulating hundreds of genes, including many that code for extracellular virulence factors.</text>
</comment>
<comment type="similarity">
    <text evidence="3">Belongs to the peptidase S45 family.</text>
</comment>
<keyword id="KW-0378">Hydrolase</keyword>
<keyword id="KW-0574">Periplasm</keyword>
<keyword id="KW-0673">Quorum sensing</keyword>
<keyword id="KW-1185">Reference proteome</keyword>
<keyword id="KW-0732">Signal</keyword>
<keyword id="KW-0865">Zymogen</keyword>
<evidence type="ECO:0000250" key="1"/>
<evidence type="ECO:0000255" key="2"/>
<evidence type="ECO:0000305" key="3"/>
<name>PVDQ_PSEPK</name>
<feature type="signal peptide" evidence="2">
    <location>
        <begin position="1"/>
        <end position="28"/>
    </location>
</feature>
<feature type="chain" id="PRO_0000253365" description="Acyl-homoserine lactone acylase PvdQ">
    <location>
        <begin position="29"/>
        <end position="772"/>
    </location>
</feature>
<feature type="chain" id="PRO_0000253366" description="Acyl-homoserine lactone acylase PvdQ subunit alpha">
    <location>
        <begin position="29"/>
        <end position="198" status="uncertain"/>
    </location>
</feature>
<feature type="propeptide" id="PRO_0000253367" description="Spacer peptide" evidence="1">
    <location>
        <begin position="199" status="uncertain"/>
        <end position="220"/>
    </location>
</feature>
<feature type="chain" id="PRO_0000253368" description="Acyl-homoserine lactone acylase PvdQ subunit beta">
    <location>
        <begin position="221"/>
        <end position="772"/>
    </location>
</feature>
<feature type="active site" description="Nucleophile" evidence="1">
    <location>
        <position position="221"/>
    </location>
</feature>
<reference key="1">
    <citation type="journal article" date="2002" name="Environ. Microbiol.">
        <title>Complete genome sequence and comparative analysis of the metabolically versatile Pseudomonas putida KT2440.</title>
        <authorList>
            <person name="Nelson K.E."/>
            <person name="Weinel C."/>
            <person name="Paulsen I.T."/>
            <person name="Dodson R.J."/>
            <person name="Hilbert H."/>
            <person name="Martins dos Santos V.A.P."/>
            <person name="Fouts D.E."/>
            <person name="Gill S.R."/>
            <person name="Pop M."/>
            <person name="Holmes M."/>
            <person name="Brinkac L.M."/>
            <person name="Beanan M.J."/>
            <person name="DeBoy R.T."/>
            <person name="Daugherty S.C."/>
            <person name="Kolonay J.F."/>
            <person name="Madupu R."/>
            <person name="Nelson W.C."/>
            <person name="White O."/>
            <person name="Peterson J.D."/>
            <person name="Khouri H.M."/>
            <person name="Hance I."/>
            <person name="Chris Lee P."/>
            <person name="Holtzapple E.K."/>
            <person name="Scanlan D."/>
            <person name="Tran K."/>
            <person name="Moazzez A."/>
            <person name="Utterback T.R."/>
            <person name="Rizzo M."/>
            <person name="Lee K."/>
            <person name="Kosack D."/>
            <person name="Moestl D."/>
            <person name="Wedler H."/>
            <person name="Lauber J."/>
            <person name="Stjepandic D."/>
            <person name="Hoheisel J."/>
            <person name="Straetz M."/>
            <person name="Heim S."/>
            <person name="Kiewitz C."/>
            <person name="Eisen J.A."/>
            <person name="Timmis K.N."/>
            <person name="Duesterhoeft A."/>
            <person name="Tuemmler B."/>
            <person name="Fraser C.M."/>
        </authorList>
    </citation>
    <scope>NUCLEOTIDE SEQUENCE [LARGE SCALE GENOMIC DNA]</scope>
    <source>
        <strain>ATCC 47054 / DSM 6125 / CFBP 8728 / NCIMB 11950 / KT2440</strain>
    </source>
</reference>
<organism>
    <name type="scientific">Pseudomonas putida (strain ATCC 47054 / DSM 6125 / CFBP 8728 / NCIMB 11950 / KT2440)</name>
    <dbReference type="NCBI Taxonomy" id="160488"/>
    <lineage>
        <taxon>Bacteria</taxon>
        <taxon>Pseudomonadati</taxon>
        <taxon>Pseudomonadota</taxon>
        <taxon>Gammaproteobacteria</taxon>
        <taxon>Pseudomonadales</taxon>
        <taxon>Pseudomonadaceae</taxon>
        <taxon>Pseudomonas</taxon>
    </lineage>
</organism>
<proteinExistence type="inferred from homology"/>
<protein>
    <recommendedName>
        <fullName>Acyl-homoserine lactone acylase PvdQ</fullName>
        <shortName>AHL acylase PvdQ</shortName>
        <shortName>Acyl-HSL acylase PvdQ</shortName>
        <ecNumber>3.5.1.97</ecNumber>
    </recommendedName>
    <component>
        <recommendedName>
            <fullName>Acyl-homoserine lactone acylase PvdQ subunit alpha</fullName>
            <shortName>Acyl-HSL acylase PvdQ subunit alpha</shortName>
        </recommendedName>
    </component>
    <component>
        <recommendedName>
            <fullName>Acyl-homoserine lactone acylase PvdQ subunit beta</fullName>
            <shortName>Acyl-HSL acylase PvdQ subunit beta</shortName>
        </recommendedName>
    </component>
</protein>
<sequence length="772" mass="83333">MPVFPFCRPMTCAGLAAALVAFSVGVQAQPAPADASAQIRYTRYGVPHIVAKDERGLGYGVGYAYAQDNLCLLANEVLTVSGERSRYFGAKGQTLEQRDNLASDLFFTWLNSPAAVDAFLQAQPASVQALLAGYASGYNRALVERRRQGLPAECGDGEWVRPISSQDLVKLTRRLLAEGGVGQFVEALAGAQPPTLARAQSSAGFASALARQERFAAERGSNAVAVGAQRSANGRGLLLANPHFPWMGGMRFYQMQLTIPGQLDVMGAALPGLPVVNIGFNQHLAWTHTVDTSKHFTLYRLQLDPKDPTRYVLDGKSLPMARQTIRVAVKGTDGSLSQIERQVYSSQFGPVVQWPGRLDWDAQAAYSVRDANLENSRVLQQWYQINRADSLAALKGSVEQLQGIPWVNTLAVDQGGRALYLNQSVVPYVDQQLLDTCSNPQAQGRLVVLDGSRSACQWKVDAQAAQPGIFPARLLPSLEREDFVQNSNDPAWMANPAQPLTGYSPLVSRNDQPLGMRGRFALQRLQGKARLGVDELQRMVTDEEVYLASLVLPDLLQWCKGASADVQAVCSSLAAWNGKADLDSGMGLVHFQNLFNALAEHPESWRVAFNPADPQHTPRGLAVEQAAVSRLVHQAALASLKQVSESGVAGAARWGQVQQALDGTPVPGGPQALGVYNAIYSVPHGQGKRLVVSGTSYLQLVSFTDKGPEARGLLAFSQSSEKASAHASDQTKAFAAKQLALIPFTEAQIKADPEYREVVISERDKGAVVSQP</sequence>
<dbReference type="EC" id="3.5.1.97"/>
<dbReference type="EMBL" id="AE015451">
    <property type="protein sequence ID" value="AAN68509.1"/>
    <property type="molecule type" value="Genomic_DNA"/>
</dbReference>
<dbReference type="RefSeq" id="NP_745045.1">
    <property type="nucleotide sequence ID" value="NC_002947.4"/>
</dbReference>
<dbReference type="SMR" id="Q88IU8"/>
<dbReference type="STRING" id="160488.PP_2901"/>
<dbReference type="MEROPS" id="S45.004"/>
<dbReference type="PaxDb" id="160488-PP_2901"/>
<dbReference type="KEGG" id="ppu:PP_2901"/>
<dbReference type="PATRIC" id="fig|160488.4.peg.3075"/>
<dbReference type="eggNOG" id="COG2366">
    <property type="taxonomic scope" value="Bacteria"/>
</dbReference>
<dbReference type="HOGENOM" id="CLU_017615_0_0_6"/>
<dbReference type="OrthoDB" id="9760084at2"/>
<dbReference type="PhylomeDB" id="Q88IU8"/>
<dbReference type="BioCyc" id="PPUT160488:G1G01-3080-MONOMER"/>
<dbReference type="Proteomes" id="UP000000556">
    <property type="component" value="Chromosome"/>
</dbReference>
<dbReference type="GO" id="GO:0042597">
    <property type="term" value="C:periplasmic space"/>
    <property type="evidence" value="ECO:0007669"/>
    <property type="project" value="UniProtKB-SubCell"/>
</dbReference>
<dbReference type="GO" id="GO:0016811">
    <property type="term" value="F:hydrolase activity, acting on carbon-nitrogen (but not peptide) bonds, in linear amides"/>
    <property type="evidence" value="ECO:0007669"/>
    <property type="project" value="InterPro"/>
</dbReference>
<dbReference type="GO" id="GO:0017000">
    <property type="term" value="P:antibiotic biosynthetic process"/>
    <property type="evidence" value="ECO:0007669"/>
    <property type="project" value="InterPro"/>
</dbReference>
<dbReference type="GO" id="GO:0009372">
    <property type="term" value="P:quorum sensing"/>
    <property type="evidence" value="ECO:0007669"/>
    <property type="project" value="UniProtKB-KW"/>
</dbReference>
<dbReference type="CDD" id="cd01936">
    <property type="entry name" value="Ntn_CA"/>
    <property type="match status" value="1"/>
</dbReference>
<dbReference type="Gene3D" id="1.10.1400.10">
    <property type="match status" value="1"/>
</dbReference>
<dbReference type="Gene3D" id="2.30.120.10">
    <property type="match status" value="1"/>
</dbReference>
<dbReference type="Gene3D" id="3.60.20.10">
    <property type="entry name" value="Glutamine Phosphoribosylpyrophosphate, subunit 1, domain 1"/>
    <property type="match status" value="1"/>
</dbReference>
<dbReference type="Gene3D" id="1.10.439.10">
    <property type="entry name" value="Penicillin Amidohydrolase, domain 1"/>
    <property type="match status" value="1"/>
</dbReference>
<dbReference type="InterPro" id="IPR029055">
    <property type="entry name" value="Ntn_hydrolases_N"/>
</dbReference>
<dbReference type="InterPro" id="IPR043147">
    <property type="entry name" value="Penicillin_amidase_A-knob"/>
</dbReference>
<dbReference type="InterPro" id="IPR023343">
    <property type="entry name" value="Penicillin_amidase_dom1"/>
</dbReference>
<dbReference type="InterPro" id="IPR043146">
    <property type="entry name" value="Penicillin_amidase_N_B-knob"/>
</dbReference>
<dbReference type="InterPro" id="IPR002692">
    <property type="entry name" value="S45"/>
</dbReference>
<dbReference type="PANTHER" id="PTHR34218:SF3">
    <property type="entry name" value="ACYL-HOMOSERINE LACTONE ACYLASE PVDQ"/>
    <property type="match status" value="1"/>
</dbReference>
<dbReference type="PANTHER" id="PTHR34218">
    <property type="entry name" value="PEPTIDASE S45 PENICILLIN AMIDASE"/>
    <property type="match status" value="1"/>
</dbReference>
<dbReference type="Pfam" id="PF01804">
    <property type="entry name" value="Penicil_amidase"/>
    <property type="match status" value="1"/>
</dbReference>
<dbReference type="SUPFAM" id="SSF56235">
    <property type="entry name" value="N-terminal nucleophile aminohydrolases (Ntn hydrolases)"/>
    <property type="match status" value="1"/>
</dbReference>